<protein>
    <recommendedName>
        <fullName evidence="8">Ribosomal oxygenase 2</fullName>
    </recommendedName>
    <alternativeName>
        <fullName>Bifunctional lysine-specific demethylase and histidyl-hydroxylase MINA</fullName>
        <ecNumber evidence="2">1.14.11.79</ecNumber>
    </alternativeName>
    <alternativeName>
        <fullName>Histone lysine demethylase MINA</fullName>
    </alternativeName>
    <alternativeName>
        <fullName>MYC-induced nuclear antigen</fullName>
    </alternativeName>
</protein>
<proteinExistence type="evidence at transcript level"/>
<accession>Q8CFC1</accession>
<keyword id="KW-0223">Dioxygenase</keyword>
<keyword id="KW-0408">Iron</keyword>
<keyword id="KW-0479">Metal-binding</keyword>
<keyword id="KW-0539">Nucleus</keyword>
<keyword id="KW-0560">Oxidoreductase</keyword>
<keyword id="KW-0597">Phosphoprotein</keyword>
<keyword id="KW-1185">Reference proteome</keyword>
<keyword id="KW-0690">Ribosome biogenesis</keyword>
<keyword id="KW-0804">Transcription</keyword>
<keyword id="KW-0805">Transcription regulation</keyword>
<evidence type="ECO:0000250" key="1"/>
<evidence type="ECO:0000250" key="2">
    <source>
        <dbReference type="UniProtKB" id="Q8IUF8"/>
    </source>
</evidence>
<evidence type="ECO:0000255" key="3">
    <source>
        <dbReference type="PROSITE-ProRule" id="PRU00538"/>
    </source>
</evidence>
<evidence type="ECO:0000269" key="4">
    <source>
    </source>
</evidence>
<evidence type="ECO:0000305" key="5"/>
<evidence type="ECO:0000312" key="6">
    <source>
        <dbReference type="EMBL" id="AAH87650.1"/>
    </source>
</evidence>
<evidence type="ECO:0000312" key="7">
    <source>
        <dbReference type="EMBL" id="BAC16362.1"/>
    </source>
</evidence>
<evidence type="ECO:0000312" key="8">
    <source>
        <dbReference type="RGD" id="708521"/>
    </source>
</evidence>
<feature type="chain" id="PRO_0000308380" description="Ribosomal oxygenase 2">
    <location>
        <begin position="1"/>
        <end position="465"/>
    </location>
</feature>
<feature type="domain" description="JmjC" evidence="3">
    <location>
        <begin position="139"/>
        <end position="271"/>
    </location>
</feature>
<feature type="binding site" evidence="3">
    <location>
        <position position="179"/>
    </location>
    <ligand>
        <name>Fe cation</name>
        <dbReference type="ChEBI" id="CHEBI:24875"/>
        <note>catalytic</note>
    </ligand>
</feature>
<feature type="binding site" evidence="3">
    <location>
        <position position="181"/>
    </location>
    <ligand>
        <name>Fe cation</name>
        <dbReference type="ChEBI" id="CHEBI:24875"/>
        <note>catalytic</note>
    </ligand>
</feature>
<feature type="binding site" evidence="3">
    <location>
        <position position="240"/>
    </location>
    <ligand>
        <name>Fe cation</name>
        <dbReference type="ChEBI" id="CHEBI:24875"/>
        <note>catalytic</note>
    </ligand>
</feature>
<feature type="modified residue" description="Phosphoserine" evidence="2">
    <location>
        <position position="309"/>
    </location>
</feature>
<comment type="function">
    <text evidence="1 4">Oxygenase that can act as both a histone lysine demethylase and a ribosomal histidine hydroxylase. Is involved in the demethylation of trimethylated 'Lys-9' on histone H3 (H3K9me3), leading to an increase in ribosomal RNA expression. Also catalyzes the hydroxylation of 60S ribosomal protein L27a on 'His-39' (By similarity). May play an important role in cell growth and survival. May be involved in ribosome biogenesis, most likely during the assembly process of pre-ribosomal particles.</text>
</comment>
<comment type="catalytic activity">
    <reaction evidence="2">
        <text>L-histidyl-[ribosomal protein uL15] + 2-oxoglutarate + O2 = (3S)-3-hydroxy-L-histidyl-[ribosomal protein uL15] + succinate + CO2</text>
        <dbReference type="Rhea" id="RHEA:54024"/>
        <dbReference type="Rhea" id="RHEA-COMP:13760"/>
        <dbReference type="Rhea" id="RHEA-COMP:13761"/>
        <dbReference type="ChEBI" id="CHEBI:15379"/>
        <dbReference type="ChEBI" id="CHEBI:16526"/>
        <dbReference type="ChEBI" id="CHEBI:16810"/>
        <dbReference type="ChEBI" id="CHEBI:29979"/>
        <dbReference type="ChEBI" id="CHEBI:30031"/>
        <dbReference type="ChEBI" id="CHEBI:138021"/>
    </reaction>
</comment>
<comment type="catalytic activity">
    <reaction evidence="2">
        <text>L-histidyl-[protein] + 2-oxoglutarate + O2 = (3S)-3-hydroxy-L-histidyl-[protein] + succinate + CO2</text>
        <dbReference type="Rhea" id="RHEA:54256"/>
        <dbReference type="Rhea" id="RHEA-COMP:9745"/>
        <dbReference type="Rhea" id="RHEA-COMP:13840"/>
        <dbReference type="ChEBI" id="CHEBI:15379"/>
        <dbReference type="ChEBI" id="CHEBI:16526"/>
        <dbReference type="ChEBI" id="CHEBI:16810"/>
        <dbReference type="ChEBI" id="CHEBI:29979"/>
        <dbReference type="ChEBI" id="CHEBI:30031"/>
        <dbReference type="ChEBI" id="CHEBI:138021"/>
        <dbReference type="EC" id="1.14.11.79"/>
    </reaction>
</comment>
<comment type="cofactor">
    <cofactor evidence="1">
        <name>Fe(2+)</name>
        <dbReference type="ChEBI" id="CHEBI:29033"/>
    </cofactor>
    <text evidence="1">Binds 1 Fe(2+) ion per subunit.</text>
</comment>
<comment type="subcellular location">
    <subcellularLocation>
        <location evidence="2">Nucleus</location>
    </subcellularLocation>
    <subcellularLocation>
        <location evidence="2">Nucleus</location>
        <location evidence="2">Nucleolus</location>
    </subcellularLocation>
</comment>
<comment type="similarity">
    <text evidence="5">Belongs to the ROX family. MINA53 subfamily.</text>
</comment>
<gene>
    <name evidence="8" type="primary">Riox2</name>
    <name type="synonym">Mina</name>
    <name evidence="7" type="synonym">Mina53</name>
</gene>
<name>RIOX2_RAT</name>
<sequence>MPKKVKPTGDENEEESVPCKQVKEELPNTLSVLNFDSPSSFFESLISPIKVETFFKEFWEQKPLLIQRDDPSLAAYYQSLFSLSDLRSLCSQGLYYGRDVNVCRCIGGKKKVLNKDGKAQFLQLRKDFDQKRATIQFHQPQRFKDELWRIQEKLECYFGSLVGSNVYMTPAGSQGLPPHYDDVEVFILQLEGRKRWRLYSPTVPLAREYSVEPEDRIGTPTHDFLLKPGDLLYFPRGTIHQAETPSGLAHSIHLTISTYQNNSWGDYLLDSISGLVFDIAKEDVALRTGMPRRMLMNVETPADVTRKLSGFLRTLADQLEGRKELLSSDMKKDFVMHRLPPFCVGNGTESMNPGGKLPRLNSIVRLQFKDHIVLTVGPDQNQSDEAQQKVVYIYHSLKNERQTHMMGKEVETEIYGLRFPLSYVDALKQIWCGSPVRVKDLKLGTDEEKENLAVSLWTECLVHVL</sequence>
<organism>
    <name type="scientific">Rattus norvegicus</name>
    <name type="common">Rat</name>
    <dbReference type="NCBI Taxonomy" id="10116"/>
    <lineage>
        <taxon>Eukaryota</taxon>
        <taxon>Metazoa</taxon>
        <taxon>Chordata</taxon>
        <taxon>Craniata</taxon>
        <taxon>Vertebrata</taxon>
        <taxon>Euteleostomi</taxon>
        <taxon>Mammalia</taxon>
        <taxon>Eutheria</taxon>
        <taxon>Euarchontoglires</taxon>
        <taxon>Glires</taxon>
        <taxon>Rodentia</taxon>
        <taxon>Myomorpha</taxon>
        <taxon>Muroidea</taxon>
        <taxon>Muridae</taxon>
        <taxon>Murinae</taxon>
        <taxon>Rattus</taxon>
    </lineage>
</organism>
<reference evidence="5 7" key="1">
    <citation type="journal article" date="2002" name="J. Biol. Chem.">
        <title>A novel myc target gene, mina53, that is involved in cell proliferation.</title>
        <authorList>
            <person name="Tsuneoka M."/>
            <person name="Koda Y."/>
            <person name="Soejima M."/>
            <person name="Teye K."/>
            <person name="Kimura H."/>
        </authorList>
    </citation>
    <scope>NUCLEOTIDE SEQUENCE [MRNA]</scope>
    <scope>FUNCTION</scope>
</reference>
<reference evidence="6" key="2">
    <citation type="journal article" date="2004" name="Genome Res.">
        <title>The status, quality, and expansion of the NIH full-length cDNA project: the Mammalian Gene Collection (MGC).</title>
        <authorList>
            <consortium name="The MGC Project Team"/>
        </authorList>
    </citation>
    <scope>NUCLEOTIDE SEQUENCE [LARGE SCALE MRNA]</scope>
    <source>
        <tissue evidence="6">Ovary</tissue>
    </source>
</reference>
<dbReference type="EC" id="1.14.11.79" evidence="2"/>
<dbReference type="EMBL" id="AB083195">
    <property type="protein sequence ID" value="BAC16362.1"/>
    <property type="molecule type" value="mRNA"/>
</dbReference>
<dbReference type="EMBL" id="BC087650">
    <property type="protein sequence ID" value="AAH87650.1"/>
    <property type="molecule type" value="mRNA"/>
</dbReference>
<dbReference type="RefSeq" id="NP_695221.1">
    <property type="nucleotide sequence ID" value="NM_153309.2"/>
</dbReference>
<dbReference type="RefSeq" id="XP_038943977.1">
    <property type="nucleotide sequence ID" value="XM_039088049.2"/>
</dbReference>
<dbReference type="SMR" id="Q8CFC1"/>
<dbReference type="FunCoup" id="Q8CFC1">
    <property type="interactions" value="252"/>
</dbReference>
<dbReference type="IntAct" id="Q8CFC1">
    <property type="interactions" value="1"/>
</dbReference>
<dbReference type="STRING" id="10116.ENSRNOP00000002285"/>
<dbReference type="iPTMnet" id="Q8CFC1"/>
<dbReference type="PhosphoSitePlus" id="Q8CFC1"/>
<dbReference type="PaxDb" id="10116-ENSRNOP00000002285"/>
<dbReference type="Ensembl" id="ENSRNOT00000100511.1">
    <property type="protein sequence ID" value="ENSRNOP00000081634.1"/>
    <property type="gene ID" value="ENSRNOG00000001680.8"/>
</dbReference>
<dbReference type="GeneID" id="266670"/>
<dbReference type="KEGG" id="rno:266670"/>
<dbReference type="UCSC" id="RGD:708521">
    <property type="organism name" value="rat"/>
</dbReference>
<dbReference type="AGR" id="RGD:708521"/>
<dbReference type="CTD" id="84864"/>
<dbReference type="RGD" id="708521">
    <property type="gene designation" value="Riox2"/>
</dbReference>
<dbReference type="eggNOG" id="KOG3706">
    <property type="taxonomic scope" value="Eukaryota"/>
</dbReference>
<dbReference type="GeneTree" id="ENSGT00390000000083"/>
<dbReference type="InParanoid" id="Q8CFC1"/>
<dbReference type="OMA" id="IRREMVY"/>
<dbReference type="OrthoDB" id="425950at2759"/>
<dbReference type="PhylomeDB" id="Q8CFC1"/>
<dbReference type="TreeFam" id="TF318659"/>
<dbReference type="Reactome" id="R-RNO-3214842">
    <property type="pathway name" value="HDMs demethylate histones"/>
</dbReference>
<dbReference type="Reactome" id="R-RNO-9629569">
    <property type="pathway name" value="Protein hydroxylation"/>
</dbReference>
<dbReference type="PRO" id="PR:Q8CFC1"/>
<dbReference type="Proteomes" id="UP000002494">
    <property type="component" value="Chromosome 11"/>
</dbReference>
<dbReference type="GO" id="GO:0005829">
    <property type="term" value="C:cytosol"/>
    <property type="evidence" value="ECO:0000266"/>
    <property type="project" value="RGD"/>
</dbReference>
<dbReference type="GO" id="GO:0005730">
    <property type="term" value="C:nucleolus"/>
    <property type="evidence" value="ECO:0000318"/>
    <property type="project" value="GO_Central"/>
</dbReference>
<dbReference type="GO" id="GO:0005654">
    <property type="term" value="C:nucleoplasm"/>
    <property type="evidence" value="ECO:0007669"/>
    <property type="project" value="Ensembl"/>
</dbReference>
<dbReference type="GO" id="GO:0005634">
    <property type="term" value="C:nucleus"/>
    <property type="evidence" value="ECO:0000266"/>
    <property type="project" value="RGD"/>
</dbReference>
<dbReference type="GO" id="GO:0005667">
    <property type="term" value="C:transcription regulator complex"/>
    <property type="evidence" value="ECO:0000266"/>
    <property type="project" value="RGD"/>
</dbReference>
<dbReference type="GO" id="GO:0051864">
    <property type="term" value="F:histone H3K36 demethylase activity"/>
    <property type="evidence" value="ECO:0000318"/>
    <property type="project" value="GO_Central"/>
</dbReference>
<dbReference type="GO" id="GO:0032453">
    <property type="term" value="F:histone H3K4 demethylase activity"/>
    <property type="evidence" value="ECO:0000318"/>
    <property type="project" value="GO_Central"/>
</dbReference>
<dbReference type="GO" id="GO:0042802">
    <property type="term" value="F:identical protein binding"/>
    <property type="evidence" value="ECO:0000266"/>
    <property type="project" value="RGD"/>
</dbReference>
<dbReference type="GO" id="GO:0046872">
    <property type="term" value="F:metal ion binding"/>
    <property type="evidence" value="ECO:0007669"/>
    <property type="project" value="UniProtKB-KW"/>
</dbReference>
<dbReference type="GO" id="GO:0036139">
    <property type="term" value="F:peptidyl-histidine dioxygenase activity"/>
    <property type="evidence" value="ECO:0000266"/>
    <property type="project" value="RGD"/>
</dbReference>
<dbReference type="GO" id="GO:0003714">
    <property type="term" value="F:transcription corepressor activity"/>
    <property type="evidence" value="ECO:0000266"/>
    <property type="project" value="RGD"/>
</dbReference>
<dbReference type="GO" id="GO:0042254">
    <property type="term" value="P:ribosome biogenesis"/>
    <property type="evidence" value="ECO:0007669"/>
    <property type="project" value="UniProtKB-KW"/>
</dbReference>
<dbReference type="FunFam" id="2.60.120.650:FF:000032">
    <property type="entry name" value="Ribosomal oxygenase 2"/>
    <property type="match status" value="1"/>
</dbReference>
<dbReference type="FunFam" id="3.90.930.40:FF:000002">
    <property type="entry name" value="Ribosomal oxygenase 2"/>
    <property type="match status" value="1"/>
</dbReference>
<dbReference type="Gene3D" id="3.90.930.40">
    <property type="match status" value="1"/>
</dbReference>
<dbReference type="Gene3D" id="2.60.120.650">
    <property type="entry name" value="Cupin"/>
    <property type="match status" value="1"/>
</dbReference>
<dbReference type="Gene3D" id="1.10.10.1500">
    <property type="entry name" value="JmjC domain-containing ribosomal oxygenase (ROX), dimer domain"/>
    <property type="match status" value="1"/>
</dbReference>
<dbReference type="InterPro" id="IPR003347">
    <property type="entry name" value="JmjC_dom"/>
</dbReference>
<dbReference type="InterPro" id="IPR039994">
    <property type="entry name" value="NO66-like"/>
</dbReference>
<dbReference type="InterPro" id="IPR046799">
    <property type="entry name" value="ROXA-like_wH"/>
</dbReference>
<dbReference type="PANTHER" id="PTHR13096">
    <property type="entry name" value="MINA53 MYC INDUCED NUCLEAR ANTIGEN"/>
    <property type="match status" value="1"/>
</dbReference>
<dbReference type="PANTHER" id="PTHR13096:SF7">
    <property type="entry name" value="RIBOSOMAL OXYGENASE 2"/>
    <property type="match status" value="1"/>
</dbReference>
<dbReference type="Pfam" id="PF08007">
    <property type="entry name" value="JmjC_2"/>
    <property type="match status" value="1"/>
</dbReference>
<dbReference type="Pfam" id="PF20514">
    <property type="entry name" value="ROXA-like_wH"/>
    <property type="match status" value="1"/>
</dbReference>
<dbReference type="SUPFAM" id="SSF51197">
    <property type="entry name" value="Clavaminate synthase-like"/>
    <property type="match status" value="1"/>
</dbReference>
<dbReference type="PROSITE" id="PS51184">
    <property type="entry name" value="JMJC"/>
    <property type="match status" value="1"/>
</dbReference>